<reference key="1">
    <citation type="journal article" date="2002" name="Genome Res.">
        <title>A complete sequence of the T. tengcongensis genome.</title>
        <authorList>
            <person name="Bao Q."/>
            <person name="Tian Y."/>
            <person name="Li W."/>
            <person name="Xu Z."/>
            <person name="Xuan Z."/>
            <person name="Hu S."/>
            <person name="Dong W."/>
            <person name="Yang J."/>
            <person name="Chen Y."/>
            <person name="Xue Y."/>
            <person name="Xu Y."/>
            <person name="Lai X."/>
            <person name="Huang L."/>
            <person name="Dong X."/>
            <person name="Ma Y."/>
            <person name="Ling L."/>
            <person name="Tan H."/>
            <person name="Chen R."/>
            <person name="Wang J."/>
            <person name="Yu J."/>
            <person name="Yang H."/>
        </authorList>
    </citation>
    <scope>NUCLEOTIDE SEQUENCE [LARGE SCALE GENOMIC DNA]</scope>
    <source>
        <strain>DSM 15242 / JCM 11007 / NBRC 100824 / MB4</strain>
    </source>
</reference>
<keyword id="KW-0312">Gluconeogenesis</keyword>
<keyword id="KW-0324">Glycolysis</keyword>
<keyword id="KW-0413">Isomerase</keyword>
<keyword id="KW-1185">Reference proteome</keyword>
<gene>
    <name evidence="1" type="primary">gpmA</name>
    <name type="ordered locus">TTE2487</name>
</gene>
<comment type="function">
    <text evidence="1">Catalyzes the interconversion of 2-phosphoglycerate and 3-phosphoglycerate.</text>
</comment>
<comment type="catalytic activity">
    <reaction evidence="1">
        <text>(2R)-2-phosphoglycerate = (2R)-3-phosphoglycerate</text>
        <dbReference type="Rhea" id="RHEA:15901"/>
        <dbReference type="ChEBI" id="CHEBI:58272"/>
        <dbReference type="ChEBI" id="CHEBI:58289"/>
        <dbReference type="EC" id="5.4.2.11"/>
    </reaction>
</comment>
<comment type="pathway">
    <text evidence="1">Carbohydrate degradation; glycolysis; pyruvate from D-glyceraldehyde 3-phosphate: step 3/5.</text>
</comment>
<comment type="similarity">
    <text evidence="1">Belongs to the phosphoglycerate mutase family. BPG-dependent PGAM subfamily.</text>
</comment>
<feature type="chain" id="PRO_0000179932" description="2,3-bisphosphoglycerate-dependent phosphoglycerate mutase">
    <location>
        <begin position="1"/>
        <end position="249"/>
    </location>
</feature>
<feature type="active site" description="Tele-phosphohistidine intermediate" evidence="1">
    <location>
        <position position="9"/>
    </location>
</feature>
<feature type="active site" description="Proton donor/acceptor" evidence="1">
    <location>
        <position position="87"/>
    </location>
</feature>
<feature type="binding site" evidence="1">
    <location>
        <begin position="8"/>
        <end position="15"/>
    </location>
    <ligand>
        <name>substrate</name>
    </ligand>
</feature>
<feature type="binding site" evidence="1">
    <location>
        <begin position="21"/>
        <end position="22"/>
    </location>
    <ligand>
        <name>substrate</name>
    </ligand>
</feature>
<feature type="binding site" evidence="1">
    <location>
        <position position="60"/>
    </location>
    <ligand>
        <name>substrate</name>
    </ligand>
</feature>
<feature type="binding site" evidence="1">
    <location>
        <begin position="87"/>
        <end position="90"/>
    </location>
    <ligand>
        <name>substrate</name>
    </ligand>
</feature>
<feature type="binding site" evidence="1">
    <location>
        <position position="98"/>
    </location>
    <ligand>
        <name>substrate</name>
    </ligand>
</feature>
<feature type="binding site" evidence="1">
    <location>
        <begin position="114"/>
        <end position="115"/>
    </location>
    <ligand>
        <name>substrate</name>
    </ligand>
</feature>
<feature type="binding site" evidence="1">
    <location>
        <begin position="183"/>
        <end position="184"/>
    </location>
    <ligand>
        <name>substrate</name>
    </ligand>
</feature>
<feature type="site" description="Transition state stabilizer" evidence="1">
    <location>
        <position position="182"/>
    </location>
</feature>
<dbReference type="EC" id="5.4.2.11" evidence="1"/>
<dbReference type="EMBL" id="AE008691">
    <property type="protein sequence ID" value="AAM25617.1"/>
    <property type="molecule type" value="Genomic_DNA"/>
</dbReference>
<dbReference type="RefSeq" id="WP_011026502.1">
    <property type="nucleotide sequence ID" value="NC_003869.1"/>
</dbReference>
<dbReference type="SMR" id="Q8R7C8"/>
<dbReference type="STRING" id="273068.TTE2487"/>
<dbReference type="KEGG" id="tte:TTE2487"/>
<dbReference type="eggNOG" id="COG0588">
    <property type="taxonomic scope" value="Bacteria"/>
</dbReference>
<dbReference type="HOGENOM" id="CLU_033323_1_1_9"/>
<dbReference type="OrthoDB" id="9781415at2"/>
<dbReference type="UniPathway" id="UPA00109">
    <property type="reaction ID" value="UER00186"/>
</dbReference>
<dbReference type="Proteomes" id="UP000000555">
    <property type="component" value="Chromosome"/>
</dbReference>
<dbReference type="GO" id="GO:0004619">
    <property type="term" value="F:phosphoglycerate mutase activity"/>
    <property type="evidence" value="ECO:0007669"/>
    <property type="project" value="UniProtKB-EC"/>
</dbReference>
<dbReference type="GO" id="GO:0006094">
    <property type="term" value="P:gluconeogenesis"/>
    <property type="evidence" value="ECO:0007669"/>
    <property type="project" value="UniProtKB-UniRule"/>
</dbReference>
<dbReference type="GO" id="GO:0006096">
    <property type="term" value="P:glycolytic process"/>
    <property type="evidence" value="ECO:0007669"/>
    <property type="project" value="UniProtKB-UniRule"/>
</dbReference>
<dbReference type="CDD" id="cd07067">
    <property type="entry name" value="HP_PGM_like"/>
    <property type="match status" value="1"/>
</dbReference>
<dbReference type="FunFam" id="3.40.50.1240:FF:000003">
    <property type="entry name" value="2,3-bisphosphoglycerate-dependent phosphoglycerate mutase"/>
    <property type="match status" value="1"/>
</dbReference>
<dbReference type="Gene3D" id="3.40.50.1240">
    <property type="entry name" value="Phosphoglycerate mutase-like"/>
    <property type="match status" value="1"/>
</dbReference>
<dbReference type="HAMAP" id="MF_01039">
    <property type="entry name" value="PGAM_GpmA"/>
    <property type="match status" value="1"/>
</dbReference>
<dbReference type="InterPro" id="IPR013078">
    <property type="entry name" value="His_Pase_superF_clade-1"/>
</dbReference>
<dbReference type="InterPro" id="IPR029033">
    <property type="entry name" value="His_PPase_superfam"/>
</dbReference>
<dbReference type="InterPro" id="IPR001345">
    <property type="entry name" value="PG/BPGM_mutase_AS"/>
</dbReference>
<dbReference type="InterPro" id="IPR005952">
    <property type="entry name" value="Phosphogly_mut1"/>
</dbReference>
<dbReference type="NCBIfam" id="TIGR01258">
    <property type="entry name" value="pgm_1"/>
    <property type="match status" value="1"/>
</dbReference>
<dbReference type="NCBIfam" id="NF010713">
    <property type="entry name" value="PRK14115.1"/>
    <property type="match status" value="1"/>
</dbReference>
<dbReference type="PANTHER" id="PTHR11931">
    <property type="entry name" value="PHOSPHOGLYCERATE MUTASE"/>
    <property type="match status" value="1"/>
</dbReference>
<dbReference type="Pfam" id="PF00300">
    <property type="entry name" value="His_Phos_1"/>
    <property type="match status" value="1"/>
</dbReference>
<dbReference type="PIRSF" id="PIRSF000709">
    <property type="entry name" value="6PFK_2-Ptase"/>
    <property type="match status" value="1"/>
</dbReference>
<dbReference type="SMART" id="SM00855">
    <property type="entry name" value="PGAM"/>
    <property type="match status" value="1"/>
</dbReference>
<dbReference type="SUPFAM" id="SSF53254">
    <property type="entry name" value="Phosphoglycerate mutase-like"/>
    <property type="match status" value="1"/>
</dbReference>
<dbReference type="PROSITE" id="PS00175">
    <property type="entry name" value="PG_MUTASE"/>
    <property type="match status" value="1"/>
</dbReference>
<evidence type="ECO:0000255" key="1">
    <source>
        <dbReference type="HAMAP-Rule" id="MF_01039"/>
    </source>
</evidence>
<organism>
    <name type="scientific">Caldanaerobacter subterraneus subsp. tengcongensis (strain DSM 15242 / JCM 11007 / NBRC 100824 / MB4)</name>
    <name type="common">Thermoanaerobacter tengcongensis</name>
    <dbReference type="NCBI Taxonomy" id="273068"/>
    <lineage>
        <taxon>Bacteria</taxon>
        <taxon>Bacillati</taxon>
        <taxon>Bacillota</taxon>
        <taxon>Clostridia</taxon>
        <taxon>Thermoanaerobacterales</taxon>
        <taxon>Thermoanaerobacteraceae</taxon>
        <taxon>Caldanaerobacter</taxon>
    </lineage>
</organism>
<accession>Q8R7C8</accession>
<proteinExistence type="inferred from homology"/>
<sequence>MYKVVLLRHGESIWNMENRFTGWTDVDLSPKGIEEAKQAGKILKEKGFTFDAAFTSVLKRAIRTLWIVLDELDLMWIPVYKSWRLNERHYGALQGLNKAETAKKYGEEQVKLWRRSAEVRPPALTKDDPRYPGNDPRYADLSEDEIPLTENLIDTINRVIPYWESTIAPTIKSGKRVIIAAHGNSLRGLVKYLDNLSNEEIMELNIPTGIPLVYELDENLKPIRHYYLADEEELKKKQQEVAEQGKARA</sequence>
<protein>
    <recommendedName>
        <fullName evidence="1">2,3-bisphosphoglycerate-dependent phosphoglycerate mutase</fullName>
        <shortName evidence="1">BPG-dependent PGAM</shortName>
        <shortName evidence="1">PGAM</shortName>
        <shortName evidence="1">Phosphoglyceromutase</shortName>
        <shortName evidence="1">dPGM</shortName>
        <ecNumber evidence="1">5.4.2.11</ecNumber>
    </recommendedName>
</protein>
<name>GPMA_CALS4</name>